<gene>
    <name type="primary">shkB</name>
    <name type="ORF">DDB_G0288617</name>
</gene>
<keyword id="KW-0067">ATP-binding</keyword>
<keyword id="KW-0418">Kinase</keyword>
<keyword id="KW-0472">Membrane</keyword>
<keyword id="KW-0547">Nucleotide-binding</keyword>
<keyword id="KW-1185">Reference proteome</keyword>
<keyword id="KW-0723">Serine/threonine-protein kinase</keyword>
<keyword id="KW-0808">Transferase</keyword>
<keyword id="KW-0829">Tyrosine-protein kinase</keyword>
<sequence>MNDKISKLESSILQLTEEVKQLESKQASKELEIRTLVDNAINSQNPAQERELINKLFTESLIDLKLKAEKIQTLERYRQEIITNLLVEQKQPNDTSIISAWEQLKISSFRINPNNNNNNSNNTNSSDSNQNYSSVILNGSLTEDSTSTISPDSTKNRDEEEIIRWEIDRNEISYNREAKLGSGAFGSVYKGIVRGKEVAIKKLTQTVFEENTMNEFKKEVSLMAKLRNPHLLLFMGACTAPEDLSIVTELMPKGSVHSLLRAKEDTSDFITFKRAILIARDTVLGMTWLHASNILHLDLKPANLLVDQNWVVKVADFGLSKYMKPDSKDKLLGQAGSPLYMAPEMLVNQPYDGKVDVFSFSILLWELLTKQEPYNKLYSSYPQLVEGVVNKKNRPIIPDYFPTRLKDLLARCWDHYPSRRPSFAEISKQRILETILIDGLILDSSARQFWSQYYMGKEEVPWNSFIVNFSLYCGFESNLSADDIKIKFLKLLLVPVDSDMVTIDNFGKILTWVGPLTNGREFFDKVYSICSIKGFMAATSSKNASQYLAGKKTGTYILRFSSDPGSYAISYLNKNKEIIHARVIYKQGSGYIHHGGQTHYATLDDLIKNTFKSLGIKEPFEGGPFHALTVAASSSKPFNIAGAYIPVAPSKKI</sequence>
<dbReference type="EC" id="2.7.11.1"/>
<dbReference type="EMBL" id="AAFI02000119">
    <property type="protein sequence ID" value="EAL63133.1"/>
    <property type="molecule type" value="Genomic_DNA"/>
</dbReference>
<dbReference type="RefSeq" id="XP_636635.1">
    <property type="nucleotide sequence ID" value="XM_631543.1"/>
</dbReference>
<dbReference type="SMR" id="Q54IP4"/>
<dbReference type="BioGRID" id="1251719">
    <property type="interactions" value="1"/>
</dbReference>
<dbReference type="FunCoup" id="Q54IP4">
    <property type="interactions" value="2"/>
</dbReference>
<dbReference type="STRING" id="44689.Q54IP4"/>
<dbReference type="PaxDb" id="44689-DDB0229941"/>
<dbReference type="EnsemblProtists" id="EAL63133">
    <property type="protein sequence ID" value="EAL63133"/>
    <property type="gene ID" value="DDB_G0288617"/>
</dbReference>
<dbReference type="GeneID" id="8626716"/>
<dbReference type="KEGG" id="ddi:DDB_G0288617"/>
<dbReference type="dictyBase" id="DDB_G0288617">
    <property type="gene designation" value="shkB"/>
</dbReference>
<dbReference type="VEuPathDB" id="AmoebaDB:DDB_G0288617"/>
<dbReference type="eggNOG" id="KOG0192">
    <property type="taxonomic scope" value="Eukaryota"/>
</dbReference>
<dbReference type="HOGENOM" id="CLU_024030_0_0_1"/>
<dbReference type="InParanoid" id="Q54IP4"/>
<dbReference type="OMA" id="ICSIKGF"/>
<dbReference type="PhylomeDB" id="Q54IP4"/>
<dbReference type="PRO" id="PR:Q54IP4"/>
<dbReference type="Proteomes" id="UP000002195">
    <property type="component" value="Chromosome 5"/>
</dbReference>
<dbReference type="GO" id="GO:0005737">
    <property type="term" value="C:cytoplasm"/>
    <property type="evidence" value="ECO:0000318"/>
    <property type="project" value="GO_Central"/>
</dbReference>
<dbReference type="GO" id="GO:0016020">
    <property type="term" value="C:membrane"/>
    <property type="evidence" value="ECO:0007669"/>
    <property type="project" value="UniProtKB-SubCell"/>
</dbReference>
<dbReference type="GO" id="GO:0005524">
    <property type="term" value="F:ATP binding"/>
    <property type="evidence" value="ECO:0007669"/>
    <property type="project" value="UniProtKB-KW"/>
</dbReference>
<dbReference type="GO" id="GO:0106310">
    <property type="term" value="F:protein serine kinase activity"/>
    <property type="evidence" value="ECO:0007669"/>
    <property type="project" value="RHEA"/>
</dbReference>
<dbReference type="GO" id="GO:0004674">
    <property type="term" value="F:protein serine/threonine kinase activity"/>
    <property type="evidence" value="ECO:0000318"/>
    <property type="project" value="GO_Central"/>
</dbReference>
<dbReference type="GO" id="GO:0004713">
    <property type="term" value="F:protein tyrosine kinase activity"/>
    <property type="evidence" value="ECO:0007669"/>
    <property type="project" value="UniProtKB-KW"/>
</dbReference>
<dbReference type="GO" id="GO:0007165">
    <property type="term" value="P:signal transduction"/>
    <property type="evidence" value="ECO:0000318"/>
    <property type="project" value="GO_Central"/>
</dbReference>
<dbReference type="CDD" id="cd00173">
    <property type="entry name" value="SH2"/>
    <property type="match status" value="1"/>
</dbReference>
<dbReference type="CDD" id="cd13999">
    <property type="entry name" value="STKc_MAP3K-like"/>
    <property type="match status" value="1"/>
</dbReference>
<dbReference type="Gene3D" id="3.30.200.20">
    <property type="entry name" value="Phosphorylase Kinase, domain 1"/>
    <property type="match status" value="1"/>
</dbReference>
<dbReference type="Gene3D" id="3.30.505.10">
    <property type="entry name" value="SH2 domain"/>
    <property type="match status" value="1"/>
</dbReference>
<dbReference type="Gene3D" id="1.10.510.10">
    <property type="entry name" value="Transferase(Phosphotransferase) domain 1"/>
    <property type="match status" value="1"/>
</dbReference>
<dbReference type="InterPro" id="IPR011009">
    <property type="entry name" value="Kinase-like_dom_sf"/>
</dbReference>
<dbReference type="InterPro" id="IPR000719">
    <property type="entry name" value="Prot_kinase_dom"/>
</dbReference>
<dbReference type="InterPro" id="IPR017441">
    <property type="entry name" value="Protein_kinase_ATP_BS"/>
</dbReference>
<dbReference type="InterPro" id="IPR001245">
    <property type="entry name" value="Ser-Thr/Tyr_kinase_cat_dom"/>
</dbReference>
<dbReference type="InterPro" id="IPR008271">
    <property type="entry name" value="Ser/Thr_kinase_AS"/>
</dbReference>
<dbReference type="InterPro" id="IPR051681">
    <property type="entry name" value="Ser/Thr_Kinases-Pseudokinases"/>
</dbReference>
<dbReference type="InterPro" id="IPR000980">
    <property type="entry name" value="SH2"/>
</dbReference>
<dbReference type="InterPro" id="IPR036860">
    <property type="entry name" value="SH2_dom_sf"/>
</dbReference>
<dbReference type="PANTHER" id="PTHR44329:SF243">
    <property type="entry name" value="DUAL SPECIFICITY PROTEIN KINASE SHKB"/>
    <property type="match status" value="1"/>
</dbReference>
<dbReference type="PANTHER" id="PTHR44329">
    <property type="entry name" value="SERINE/THREONINE-PROTEIN KINASE TNNI3K-RELATED"/>
    <property type="match status" value="1"/>
</dbReference>
<dbReference type="Pfam" id="PF07714">
    <property type="entry name" value="PK_Tyr_Ser-Thr"/>
    <property type="match status" value="1"/>
</dbReference>
<dbReference type="Pfam" id="PF00017">
    <property type="entry name" value="SH2"/>
    <property type="match status" value="1"/>
</dbReference>
<dbReference type="PRINTS" id="PR00109">
    <property type="entry name" value="TYRKINASE"/>
</dbReference>
<dbReference type="SMART" id="SM00220">
    <property type="entry name" value="S_TKc"/>
    <property type="match status" value="1"/>
</dbReference>
<dbReference type="SUPFAM" id="SSF56112">
    <property type="entry name" value="Protein kinase-like (PK-like)"/>
    <property type="match status" value="1"/>
</dbReference>
<dbReference type="SUPFAM" id="SSF55550">
    <property type="entry name" value="SH2 domain"/>
    <property type="match status" value="1"/>
</dbReference>
<dbReference type="PROSITE" id="PS00107">
    <property type="entry name" value="PROTEIN_KINASE_ATP"/>
    <property type="match status" value="1"/>
</dbReference>
<dbReference type="PROSITE" id="PS50011">
    <property type="entry name" value="PROTEIN_KINASE_DOM"/>
    <property type="match status" value="1"/>
</dbReference>
<dbReference type="PROSITE" id="PS00108">
    <property type="entry name" value="PROTEIN_KINASE_ST"/>
    <property type="match status" value="1"/>
</dbReference>
<dbReference type="PROSITE" id="PS50001">
    <property type="entry name" value="SH2"/>
    <property type="match status" value="1"/>
</dbReference>
<feature type="chain" id="PRO_0000327809" description="Dual specificity protein kinase shkB">
    <location>
        <begin position="1"/>
        <end position="653"/>
    </location>
</feature>
<feature type="domain" description="Protein kinase" evidence="2">
    <location>
        <begin position="174"/>
        <end position="432"/>
    </location>
</feature>
<feature type="domain" description="SH2" evidence="3">
    <location>
        <begin position="534"/>
        <end position="625"/>
    </location>
</feature>
<feature type="region of interest" description="Disordered" evidence="5">
    <location>
        <begin position="112"/>
        <end position="133"/>
    </location>
</feature>
<feature type="active site" description="Proton acceptor" evidence="2 4">
    <location>
        <position position="298"/>
    </location>
</feature>
<feature type="binding site" evidence="2">
    <location>
        <begin position="180"/>
        <end position="188"/>
    </location>
    <ligand>
        <name>ATP</name>
        <dbReference type="ChEBI" id="CHEBI:30616"/>
    </ligand>
</feature>
<feature type="binding site" evidence="2">
    <location>
        <position position="201"/>
    </location>
    <ligand>
        <name>ATP</name>
        <dbReference type="ChEBI" id="CHEBI:30616"/>
    </ligand>
</feature>
<evidence type="ECO:0000250" key="1"/>
<evidence type="ECO:0000255" key="2">
    <source>
        <dbReference type="PROSITE-ProRule" id="PRU00159"/>
    </source>
</evidence>
<evidence type="ECO:0000255" key="3">
    <source>
        <dbReference type="PROSITE-ProRule" id="PRU00191"/>
    </source>
</evidence>
<evidence type="ECO:0000255" key="4">
    <source>
        <dbReference type="PROSITE-ProRule" id="PRU10027"/>
    </source>
</evidence>
<evidence type="ECO:0000256" key="5">
    <source>
        <dbReference type="SAM" id="MobiDB-lite"/>
    </source>
</evidence>
<evidence type="ECO:0000305" key="6"/>
<protein>
    <recommendedName>
        <fullName>Dual specificity protein kinase shkB</fullName>
        <ecNumber>2.7.11.1</ecNumber>
    </recommendedName>
    <alternativeName>
        <fullName>SH2 domain-containing protein 2</fullName>
    </alternativeName>
    <alternativeName>
        <fullName>SH2 domain-containing protein B</fullName>
    </alternativeName>
</protein>
<name>SHKB_DICDI</name>
<reference key="1">
    <citation type="journal article" date="2005" name="Nature">
        <title>The genome of the social amoeba Dictyostelium discoideum.</title>
        <authorList>
            <person name="Eichinger L."/>
            <person name="Pachebat J.A."/>
            <person name="Gloeckner G."/>
            <person name="Rajandream M.A."/>
            <person name="Sucgang R."/>
            <person name="Berriman M."/>
            <person name="Song J."/>
            <person name="Olsen R."/>
            <person name="Szafranski K."/>
            <person name="Xu Q."/>
            <person name="Tunggal B."/>
            <person name="Kummerfeld S."/>
            <person name="Madera M."/>
            <person name="Konfortov B.A."/>
            <person name="Rivero F."/>
            <person name="Bankier A.T."/>
            <person name="Lehmann R."/>
            <person name="Hamlin N."/>
            <person name="Davies R."/>
            <person name="Gaudet P."/>
            <person name="Fey P."/>
            <person name="Pilcher K."/>
            <person name="Chen G."/>
            <person name="Saunders D."/>
            <person name="Sodergren E.J."/>
            <person name="Davis P."/>
            <person name="Kerhornou A."/>
            <person name="Nie X."/>
            <person name="Hall N."/>
            <person name="Anjard C."/>
            <person name="Hemphill L."/>
            <person name="Bason N."/>
            <person name="Farbrother P."/>
            <person name="Desany B."/>
            <person name="Just E."/>
            <person name="Morio T."/>
            <person name="Rost R."/>
            <person name="Churcher C.M."/>
            <person name="Cooper J."/>
            <person name="Haydock S."/>
            <person name="van Driessche N."/>
            <person name="Cronin A."/>
            <person name="Goodhead I."/>
            <person name="Muzny D.M."/>
            <person name="Mourier T."/>
            <person name="Pain A."/>
            <person name="Lu M."/>
            <person name="Harper D."/>
            <person name="Lindsay R."/>
            <person name="Hauser H."/>
            <person name="James K.D."/>
            <person name="Quiles M."/>
            <person name="Madan Babu M."/>
            <person name="Saito T."/>
            <person name="Buchrieser C."/>
            <person name="Wardroper A."/>
            <person name="Felder M."/>
            <person name="Thangavelu M."/>
            <person name="Johnson D."/>
            <person name="Knights A."/>
            <person name="Loulseged H."/>
            <person name="Mungall K.L."/>
            <person name="Oliver K."/>
            <person name="Price C."/>
            <person name="Quail M.A."/>
            <person name="Urushihara H."/>
            <person name="Hernandez J."/>
            <person name="Rabbinowitsch E."/>
            <person name="Steffen D."/>
            <person name="Sanders M."/>
            <person name="Ma J."/>
            <person name="Kohara Y."/>
            <person name="Sharp S."/>
            <person name="Simmonds M.N."/>
            <person name="Spiegler S."/>
            <person name="Tivey A."/>
            <person name="Sugano S."/>
            <person name="White B."/>
            <person name="Walker D."/>
            <person name="Woodward J.R."/>
            <person name="Winckler T."/>
            <person name="Tanaka Y."/>
            <person name="Shaulsky G."/>
            <person name="Schleicher M."/>
            <person name="Weinstock G.M."/>
            <person name="Rosenthal A."/>
            <person name="Cox E.C."/>
            <person name="Chisholm R.L."/>
            <person name="Gibbs R.A."/>
            <person name="Loomis W.F."/>
            <person name="Platzer M."/>
            <person name="Kay R.R."/>
            <person name="Williams J.G."/>
            <person name="Dear P.H."/>
            <person name="Noegel A.A."/>
            <person name="Barrell B.G."/>
            <person name="Kuspa A."/>
        </authorList>
    </citation>
    <scope>NUCLEOTIDE SEQUENCE [LARGE SCALE GENOMIC DNA]</scope>
    <source>
        <strain>AX4</strain>
    </source>
</reference>
<reference key="2">
    <citation type="journal article" date="2004" name="Mol. Cell. Proteomics">
        <title>Identification of the linker-SH2 domain of STAT as the origin of the SH2 domain using two-dimensional structural alignment.</title>
        <authorList>
            <person name="Gao Q."/>
            <person name="Hua J."/>
            <person name="Kimura R."/>
            <person name="Headd J.J."/>
            <person name="Fu X.-Y."/>
            <person name="Chin Y.E."/>
        </authorList>
    </citation>
    <scope>IDENTIFICATION</scope>
</reference>
<comment type="function">
    <text evidence="1">Required for proper chemotaxis and phagocytosis; proper spatiotemporal control of F-actin levels in chemotaxing cells. Negative regulator of the PI3K (phosphatidylinositol 3 kinase) pathway. Predominantly phosphorylates serines and threonines and tyrosines at a lower level (By similarity).</text>
</comment>
<comment type="catalytic activity">
    <reaction>
        <text>L-seryl-[protein] + ATP = O-phospho-L-seryl-[protein] + ADP + H(+)</text>
        <dbReference type="Rhea" id="RHEA:17989"/>
        <dbReference type="Rhea" id="RHEA-COMP:9863"/>
        <dbReference type="Rhea" id="RHEA-COMP:11604"/>
        <dbReference type="ChEBI" id="CHEBI:15378"/>
        <dbReference type="ChEBI" id="CHEBI:29999"/>
        <dbReference type="ChEBI" id="CHEBI:30616"/>
        <dbReference type="ChEBI" id="CHEBI:83421"/>
        <dbReference type="ChEBI" id="CHEBI:456216"/>
        <dbReference type="EC" id="2.7.11.1"/>
    </reaction>
</comment>
<comment type="catalytic activity">
    <reaction>
        <text>L-threonyl-[protein] + ATP = O-phospho-L-threonyl-[protein] + ADP + H(+)</text>
        <dbReference type="Rhea" id="RHEA:46608"/>
        <dbReference type="Rhea" id="RHEA-COMP:11060"/>
        <dbReference type="Rhea" id="RHEA-COMP:11605"/>
        <dbReference type="ChEBI" id="CHEBI:15378"/>
        <dbReference type="ChEBI" id="CHEBI:30013"/>
        <dbReference type="ChEBI" id="CHEBI:30616"/>
        <dbReference type="ChEBI" id="CHEBI:61977"/>
        <dbReference type="ChEBI" id="CHEBI:456216"/>
        <dbReference type="EC" id="2.7.11.1"/>
    </reaction>
</comment>
<comment type="subcellular location">
    <subcellularLocation>
        <location evidence="1">Membrane</location>
    </subcellularLocation>
</comment>
<comment type="similarity">
    <text evidence="6">Belongs to the protein kinase superfamily. TKL Ser/Thr protein kinase family. SH2 domain-containing protein kinase subfamily.</text>
</comment>
<proteinExistence type="inferred from homology"/>
<accession>Q54IP4</accession>
<organism>
    <name type="scientific">Dictyostelium discoideum</name>
    <name type="common">Social amoeba</name>
    <dbReference type="NCBI Taxonomy" id="44689"/>
    <lineage>
        <taxon>Eukaryota</taxon>
        <taxon>Amoebozoa</taxon>
        <taxon>Evosea</taxon>
        <taxon>Eumycetozoa</taxon>
        <taxon>Dictyostelia</taxon>
        <taxon>Dictyosteliales</taxon>
        <taxon>Dictyosteliaceae</taxon>
        <taxon>Dictyostelium</taxon>
    </lineage>
</organism>